<dbReference type="EC" id="1.10.3.9" evidence="2"/>
<dbReference type="EMBL" id="Z00044">
    <property type="protein sequence ID" value="CAA77347.1"/>
    <property type="molecule type" value="Genomic_DNA"/>
</dbReference>
<dbReference type="PIR" id="A03462">
    <property type="entry name" value="F2NTD2"/>
</dbReference>
<dbReference type="RefSeq" id="NP_054491.1">
    <property type="nucleotide sequence ID" value="NC_001879.2"/>
</dbReference>
<dbReference type="SMR" id="P69686"/>
<dbReference type="GeneID" id="800525"/>
<dbReference type="KEGG" id="nta:800525"/>
<dbReference type="OMA" id="RWFQLGG"/>
<dbReference type="OrthoDB" id="1247798at2759"/>
<dbReference type="Proteomes" id="UP000084051">
    <property type="component" value="Unplaced"/>
</dbReference>
<dbReference type="GO" id="GO:0009535">
    <property type="term" value="C:chloroplast thylakoid membrane"/>
    <property type="evidence" value="ECO:0007669"/>
    <property type="project" value="UniProtKB-SubCell"/>
</dbReference>
<dbReference type="GO" id="GO:0009523">
    <property type="term" value="C:photosystem II"/>
    <property type="evidence" value="ECO:0007669"/>
    <property type="project" value="UniProtKB-KW"/>
</dbReference>
<dbReference type="GO" id="GO:0016168">
    <property type="term" value="F:chlorophyll binding"/>
    <property type="evidence" value="ECO:0007669"/>
    <property type="project" value="UniProtKB-UniRule"/>
</dbReference>
<dbReference type="GO" id="GO:0045156">
    <property type="term" value="F:electron transporter, transferring electrons within the cyclic electron transport pathway of photosynthesis activity"/>
    <property type="evidence" value="ECO:0007669"/>
    <property type="project" value="InterPro"/>
</dbReference>
<dbReference type="GO" id="GO:0005506">
    <property type="term" value="F:iron ion binding"/>
    <property type="evidence" value="ECO:0007669"/>
    <property type="project" value="UniProtKB-UniRule"/>
</dbReference>
<dbReference type="GO" id="GO:0010242">
    <property type="term" value="F:oxygen evolving activity"/>
    <property type="evidence" value="ECO:0007669"/>
    <property type="project" value="UniProtKB-EC"/>
</dbReference>
<dbReference type="GO" id="GO:0009772">
    <property type="term" value="P:photosynthetic electron transport in photosystem II"/>
    <property type="evidence" value="ECO:0007669"/>
    <property type="project" value="InterPro"/>
</dbReference>
<dbReference type="CDD" id="cd09288">
    <property type="entry name" value="Photosystem-II_D2"/>
    <property type="match status" value="1"/>
</dbReference>
<dbReference type="FunFam" id="1.20.85.10:FF:000001">
    <property type="entry name" value="photosystem II D2 protein-like"/>
    <property type="match status" value="1"/>
</dbReference>
<dbReference type="Gene3D" id="1.20.85.10">
    <property type="entry name" value="Photosystem II protein D1-like"/>
    <property type="match status" value="1"/>
</dbReference>
<dbReference type="HAMAP" id="MF_01383">
    <property type="entry name" value="PSII_PsbD_D2"/>
    <property type="match status" value="1"/>
</dbReference>
<dbReference type="InterPro" id="IPR055266">
    <property type="entry name" value="D1/D2"/>
</dbReference>
<dbReference type="InterPro" id="IPR036854">
    <property type="entry name" value="Photo_II_D1/D2_sf"/>
</dbReference>
<dbReference type="InterPro" id="IPR000484">
    <property type="entry name" value="Photo_RC_L/M"/>
</dbReference>
<dbReference type="InterPro" id="IPR055265">
    <property type="entry name" value="Photo_RC_L/M_CS"/>
</dbReference>
<dbReference type="InterPro" id="IPR005868">
    <property type="entry name" value="PSII_PsbD/D2"/>
</dbReference>
<dbReference type="NCBIfam" id="TIGR01152">
    <property type="entry name" value="psbD"/>
    <property type="match status" value="1"/>
</dbReference>
<dbReference type="PANTHER" id="PTHR33149:SF12">
    <property type="entry name" value="PHOTOSYSTEM II D2 PROTEIN"/>
    <property type="match status" value="1"/>
</dbReference>
<dbReference type="PANTHER" id="PTHR33149">
    <property type="entry name" value="PHOTOSYSTEM II PROTEIN D1"/>
    <property type="match status" value="1"/>
</dbReference>
<dbReference type="Pfam" id="PF00124">
    <property type="entry name" value="Photo_RC"/>
    <property type="match status" value="1"/>
</dbReference>
<dbReference type="PRINTS" id="PR00256">
    <property type="entry name" value="REACTNCENTRE"/>
</dbReference>
<dbReference type="SUPFAM" id="SSF81483">
    <property type="entry name" value="Bacterial photosystem II reaction centre, L and M subunits"/>
    <property type="match status" value="1"/>
</dbReference>
<dbReference type="PROSITE" id="PS00244">
    <property type="entry name" value="REACTION_CENTER"/>
    <property type="match status" value="1"/>
</dbReference>
<proteinExistence type="inferred from homology"/>
<organism>
    <name type="scientific">Nicotiana tabacum</name>
    <name type="common">Common tobacco</name>
    <dbReference type="NCBI Taxonomy" id="4097"/>
    <lineage>
        <taxon>Eukaryota</taxon>
        <taxon>Viridiplantae</taxon>
        <taxon>Streptophyta</taxon>
        <taxon>Embryophyta</taxon>
        <taxon>Tracheophyta</taxon>
        <taxon>Spermatophyta</taxon>
        <taxon>Magnoliopsida</taxon>
        <taxon>eudicotyledons</taxon>
        <taxon>Gunneridae</taxon>
        <taxon>Pentapetalae</taxon>
        <taxon>asterids</taxon>
        <taxon>lamiids</taxon>
        <taxon>Solanales</taxon>
        <taxon>Solanaceae</taxon>
        <taxon>Nicotianoideae</taxon>
        <taxon>Nicotianeae</taxon>
        <taxon>Nicotiana</taxon>
    </lineage>
</organism>
<name>PSBD_TOBAC</name>
<keyword id="KW-0007">Acetylation</keyword>
<keyword id="KW-0148">Chlorophyll</keyword>
<keyword id="KW-0150">Chloroplast</keyword>
<keyword id="KW-0157">Chromophore</keyword>
<keyword id="KW-0249">Electron transport</keyword>
<keyword id="KW-0408">Iron</keyword>
<keyword id="KW-0460">Magnesium</keyword>
<keyword id="KW-0472">Membrane</keyword>
<keyword id="KW-0479">Metal-binding</keyword>
<keyword id="KW-0560">Oxidoreductase</keyword>
<keyword id="KW-0597">Phosphoprotein</keyword>
<keyword id="KW-0602">Photosynthesis</keyword>
<keyword id="KW-0604">Photosystem II</keyword>
<keyword id="KW-0934">Plastid</keyword>
<keyword id="KW-1185">Reference proteome</keyword>
<keyword id="KW-0793">Thylakoid</keyword>
<keyword id="KW-0812">Transmembrane</keyword>
<keyword id="KW-1133">Transmembrane helix</keyword>
<keyword id="KW-0813">Transport</keyword>
<gene>
    <name evidence="2" type="primary">psbD</name>
</gene>
<comment type="function">
    <text evidence="2">Photosystem II (PSII) is a light-driven water:plastoquinone oxidoreductase that uses light energy to abstract electrons from H(2)O, generating O(2) and a proton gradient subsequently used for ATP formation. It consists of a core antenna complex that captures photons, and an electron transfer chain that converts photonic excitation into a charge separation. The D1/D2 (PsbA/PsbD) reaction center heterodimer binds P680, the primary electron donor of PSII as well as several subsequent electron acceptors. D2 is needed for assembly of a stable PSII complex.</text>
</comment>
<comment type="catalytic activity">
    <reaction evidence="2">
        <text>2 a plastoquinone + 4 hnu + 2 H2O = 2 a plastoquinol + O2</text>
        <dbReference type="Rhea" id="RHEA:36359"/>
        <dbReference type="Rhea" id="RHEA-COMP:9561"/>
        <dbReference type="Rhea" id="RHEA-COMP:9562"/>
        <dbReference type="ChEBI" id="CHEBI:15377"/>
        <dbReference type="ChEBI" id="CHEBI:15379"/>
        <dbReference type="ChEBI" id="CHEBI:17757"/>
        <dbReference type="ChEBI" id="CHEBI:30212"/>
        <dbReference type="ChEBI" id="CHEBI:62192"/>
        <dbReference type="EC" id="1.10.3.9"/>
    </reaction>
</comment>
<comment type="cofactor">
    <text evidence="2">The D1/D2 heterodimer binds P680, chlorophylls that are the primary electron donor of PSII, and subsequent electron acceptors. It shares a non-heme iron and each subunit binds pheophytin, quinone, additional chlorophylls, carotenoids and lipids. There is also a Cl(-1) ion associated with D1 and D2, which is required for oxygen evolution. The PSII complex binds additional chlorophylls, carotenoids and specific lipids.</text>
</comment>
<comment type="subunit">
    <text evidence="2">PSII is composed of 1 copy each of membrane proteins PsbA, PsbB, PsbC, PsbD, PsbE, PsbF, PsbH, PsbI, PsbJ, PsbK, PsbL, PsbM, PsbT, PsbX, PsbY, PsbZ, Psb30/Ycf12, at least 3 peripheral proteins of the oxygen-evolving complex and a large number of cofactors. It forms dimeric complexes.</text>
</comment>
<comment type="subcellular location">
    <subcellularLocation>
        <location evidence="2">Plastid</location>
        <location evidence="2">Chloroplast thylakoid membrane</location>
        <topology evidence="2">Multi-pass membrane protein</topology>
    </subcellularLocation>
</comment>
<comment type="miscellaneous">
    <text evidence="2">2 of the reaction center chlorophylls (ChlD1 and ChlD2) are entirely coordinated by water.</text>
</comment>
<comment type="similarity">
    <text evidence="2">Belongs to the reaction center PufL/M/PsbA/D family.</text>
</comment>
<evidence type="ECO:0000250" key="1">
    <source>
        <dbReference type="UniProtKB" id="P56761"/>
    </source>
</evidence>
<evidence type="ECO:0000255" key="2">
    <source>
        <dbReference type="HAMAP-Rule" id="MF_01383"/>
    </source>
</evidence>
<accession>P69686</accession>
<accession>P06403</accession>
<accession>Q33333</accession>
<feature type="initiator methionine" description="Removed" evidence="1">
    <location>
        <position position="1"/>
    </location>
</feature>
<feature type="chain" id="PRO_0000090522" description="Photosystem II D2 protein">
    <location>
        <begin position="2"/>
        <end position="353"/>
    </location>
</feature>
<feature type="transmembrane region" description="Helical" evidence="2">
    <location>
        <begin position="41"/>
        <end position="61"/>
    </location>
</feature>
<feature type="transmembrane region" description="Helical" evidence="2">
    <location>
        <begin position="125"/>
        <end position="141"/>
    </location>
</feature>
<feature type="transmembrane region" description="Helical" evidence="2">
    <location>
        <begin position="153"/>
        <end position="166"/>
    </location>
</feature>
<feature type="transmembrane region" description="Helical" evidence="2">
    <location>
        <begin position="208"/>
        <end position="228"/>
    </location>
</feature>
<feature type="transmembrane region" description="Helical" evidence="2">
    <location>
        <begin position="279"/>
        <end position="295"/>
    </location>
</feature>
<feature type="binding site" description="axial binding residue" evidence="2">
    <location>
        <position position="118"/>
    </location>
    <ligand>
        <name>chlorophyll a</name>
        <dbReference type="ChEBI" id="CHEBI:58416"/>
        <label>ChlzD2</label>
    </ligand>
    <ligandPart>
        <name>Mg</name>
        <dbReference type="ChEBI" id="CHEBI:25107"/>
    </ligandPart>
</feature>
<feature type="binding site" evidence="2">
    <location>
        <position position="130"/>
    </location>
    <ligand>
        <name>pheophytin a</name>
        <dbReference type="ChEBI" id="CHEBI:136840"/>
        <label>D2</label>
    </ligand>
</feature>
<feature type="binding site" evidence="2">
    <location>
        <position position="143"/>
    </location>
    <ligand>
        <name>pheophytin a</name>
        <dbReference type="ChEBI" id="CHEBI:136840"/>
        <label>D2</label>
    </ligand>
</feature>
<feature type="binding site" description="axial binding residue" evidence="2">
    <location>
        <position position="198"/>
    </location>
    <ligand>
        <name>chlorophyll a</name>
        <dbReference type="ChEBI" id="CHEBI:58416"/>
        <label>PD2</label>
    </ligand>
    <ligandPart>
        <name>Mg</name>
        <dbReference type="ChEBI" id="CHEBI:25107"/>
    </ligandPart>
</feature>
<feature type="binding site" evidence="2">
    <location>
        <position position="215"/>
    </location>
    <ligand>
        <name>a plastoquinone</name>
        <dbReference type="ChEBI" id="CHEBI:17757"/>
        <label>Q(A)</label>
    </ligand>
</feature>
<feature type="binding site" evidence="2">
    <location>
        <position position="215"/>
    </location>
    <ligand>
        <name>Fe cation</name>
        <dbReference type="ChEBI" id="CHEBI:24875"/>
        <note>ligand shared with heterodimeric partner</note>
    </ligand>
</feature>
<feature type="binding site" evidence="2">
    <location>
        <position position="262"/>
    </location>
    <ligand>
        <name>a plastoquinone</name>
        <dbReference type="ChEBI" id="CHEBI:17757"/>
        <label>Q(A)</label>
    </ligand>
</feature>
<feature type="binding site" evidence="2">
    <location>
        <position position="269"/>
    </location>
    <ligand>
        <name>Fe cation</name>
        <dbReference type="ChEBI" id="CHEBI:24875"/>
        <note>ligand shared with heterodimeric partner</note>
    </ligand>
</feature>
<feature type="modified residue" description="N-acetylthreonine" evidence="1">
    <location>
        <position position="2"/>
    </location>
</feature>
<feature type="modified residue" description="Phosphothreonine" evidence="1">
    <location>
        <position position="2"/>
    </location>
</feature>
<protein>
    <recommendedName>
        <fullName evidence="2">Photosystem II D2 protein</fullName>
        <shortName evidence="2">PSII D2 protein</shortName>
        <ecNumber evidence="2">1.10.3.9</ecNumber>
    </recommendedName>
    <alternativeName>
        <fullName evidence="2">Photosystem Q(A) protein</fullName>
    </alternativeName>
</protein>
<geneLocation type="chloroplast"/>
<sequence>MTIALGKFTKDENDLFDIMDDWLRRDRFVFVGWSGLLLFPCAYFAVGGWFTGTTFVTSWYTHGLASSYLEGCNFLTAAVSTPANSLAHSLLLLWGPEAQGDFTRWCQLGGLWTFVALHGAFGLIGFMLRQFELARSVQLRPYNAIAFSGPIAVFVSVFLIYPLGQSGWFFAPSFGVAAIFRFILFFQGFHNWTLNPFHMMGVAGVLGAALLCAIHGATVENTLFEDGDGANTFRAFNPTQAEETYSMVTANRFWSQIFGVAFSNKRWLHFFMLFVPVTGLWMSALGVVGLALNLRAYDFVSQEIRAAEDPEFETFYTKNILLNEGIRAWMAAQDQPHENLIFPEEVLPRGNAL</sequence>
<reference key="1">
    <citation type="journal article" date="1986" name="EMBO J.">
        <title>The complete nucleotide sequence of the tobacco chloroplast genome: its gene organization and expression.</title>
        <authorList>
            <person name="Shinozaki K."/>
            <person name="Ohme M."/>
            <person name="Tanaka M."/>
            <person name="Wakasugi T."/>
            <person name="Hayashida N."/>
            <person name="Matsubayashi T."/>
            <person name="Zaita N."/>
            <person name="Chunwongse J."/>
            <person name="Obokata J."/>
            <person name="Yamaguchi-Shinozaki K."/>
            <person name="Ohto C."/>
            <person name="Torazawa K."/>
            <person name="Meng B.-Y."/>
            <person name="Sugita M."/>
            <person name="Deno H."/>
            <person name="Kamogashira T."/>
            <person name="Yamada K."/>
            <person name="Kusuda J."/>
            <person name="Takaiwa F."/>
            <person name="Kato A."/>
            <person name="Tohdoh N."/>
            <person name="Shimada H."/>
            <person name="Sugiura M."/>
        </authorList>
    </citation>
    <scope>NUCLEOTIDE SEQUENCE [LARGE SCALE GENOMIC DNA]</scope>
    <source>
        <strain>cv. Bright Yellow 4</strain>
    </source>
</reference>